<sequence length="336" mass="36684">MSRPSLTRFLIEEQHAGRIDAELRQLITIVSRACKRISIAVSKGTLGGVLGDAGTGNVQGEAQKKLDVLSNDILLEANAWGGHLAACASEEMDHSQPVPDQYPSGDFLLLFDPLDGSSNIDVNVSVGTIFSVLRAPKGTEKPGDEHFLQPGTQQVAAGYCIYGPSTMLVLTLGHGTHAFTLEREEGSFLLTQANMRVPEDTAEYAINMSNQRHWEPAMQAYVGDLLAGKDGARGKDFNMRWIASMVADVHRILTRGGIFIYPWDKKDPSKPGKLRLMYEANPMSMLVEQAGGAATTGRERILDIQPTQLHQRVPVFLGSKNEVAEATRYHLDADKA</sequence>
<comment type="catalytic activity">
    <reaction evidence="1">
        <text>beta-D-fructose 1,6-bisphosphate + H2O = beta-D-fructose 6-phosphate + phosphate</text>
        <dbReference type="Rhea" id="RHEA:11064"/>
        <dbReference type="ChEBI" id="CHEBI:15377"/>
        <dbReference type="ChEBI" id="CHEBI:32966"/>
        <dbReference type="ChEBI" id="CHEBI:43474"/>
        <dbReference type="ChEBI" id="CHEBI:57634"/>
        <dbReference type="EC" id="3.1.3.11"/>
    </reaction>
</comment>
<comment type="cofactor">
    <cofactor evidence="1">
        <name>Mg(2+)</name>
        <dbReference type="ChEBI" id="CHEBI:18420"/>
    </cofactor>
    <text evidence="1">Binds 2 magnesium ions per subunit.</text>
</comment>
<comment type="pathway">
    <text evidence="1">Carbohydrate biosynthesis; gluconeogenesis.</text>
</comment>
<comment type="subunit">
    <text evidence="1">Homotetramer.</text>
</comment>
<comment type="subcellular location">
    <subcellularLocation>
        <location evidence="1">Cytoplasm</location>
    </subcellularLocation>
</comment>
<comment type="similarity">
    <text evidence="1">Belongs to the FBPase class 1 family.</text>
</comment>
<comment type="sequence caution" evidence="2">
    <conflict type="erroneous initiation">
        <sequence resource="EMBL-CDS" id="CAJ21729"/>
    </conflict>
</comment>
<name>F16PA_XANE5</name>
<evidence type="ECO:0000255" key="1">
    <source>
        <dbReference type="HAMAP-Rule" id="MF_01855"/>
    </source>
</evidence>
<evidence type="ECO:0000305" key="2"/>
<proteinExistence type="inferred from homology"/>
<keyword id="KW-0119">Carbohydrate metabolism</keyword>
<keyword id="KW-0963">Cytoplasm</keyword>
<keyword id="KW-0378">Hydrolase</keyword>
<keyword id="KW-0460">Magnesium</keyword>
<keyword id="KW-0479">Metal-binding</keyword>
<reference key="1">
    <citation type="journal article" date="2005" name="J. Bacteriol.">
        <title>Insights into genome plasticity and pathogenicity of the plant pathogenic Bacterium Xanthomonas campestris pv. vesicatoria revealed by the complete genome sequence.</title>
        <authorList>
            <person name="Thieme F."/>
            <person name="Koebnik R."/>
            <person name="Bekel T."/>
            <person name="Berger C."/>
            <person name="Boch J."/>
            <person name="Buettner D."/>
            <person name="Caldana C."/>
            <person name="Gaigalat L."/>
            <person name="Goesmann A."/>
            <person name="Kay S."/>
            <person name="Kirchner O."/>
            <person name="Lanz C."/>
            <person name="Linke B."/>
            <person name="McHardy A.C."/>
            <person name="Meyer F."/>
            <person name="Mittenhuber G."/>
            <person name="Nies D.H."/>
            <person name="Niesbach-Kloesgen U."/>
            <person name="Patschkowski T."/>
            <person name="Rueckert C."/>
            <person name="Rupp O."/>
            <person name="Schneiker S."/>
            <person name="Schuster S.C."/>
            <person name="Vorhoelter F.J."/>
            <person name="Weber E."/>
            <person name="Puehler A."/>
            <person name="Bonas U."/>
            <person name="Bartels D."/>
            <person name="Kaiser O."/>
        </authorList>
    </citation>
    <scope>NUCLEOTIDE SEQUENCE [LARGE SCALE GENOMIC DNA]</scope>
    <source>
        <strain>85-10</strain>
    </source>
</reference>
<accession>Q3BZI4</accession>
<dbReference type="EC" id="3.1.3.11" evidence="1"/>
<dbReference type="EMBL" id="AM039952">
    <property type="protein sequence ID" value="CAJ21729.1"/>
    <property type="status" value="ALT_INIT"/>
    <property type="molecule type" value="Genomic_DNA"/>
</dbReference>
<dbReference type="RefSeq" id="WP_039417260.1">
    <property type="nucleotide sequence ID" value="NZ_CP017190.1"/>
</dbReference>
<dbReference type="SMR" id="Q3BZI4"/>
<dbReference type="STRING" id="456327.BJD11_22425"/>
<dbReference type="KEGG" id="xcv:XCV0098"/>
<dbReference type="eggNOG" id="COG0158">
    <property type="taxonomic scope" value="Bacteria"/>
</dbReference>
<dbReference type="HOGENOM" id="CLU_039977_0_0_6"/>
<dbReference type="UniPathway" id="UPA00138"/>
<dbReference type="Proteomes" id="UP000007069">
    <property type="component" value="Chromosome"/>
</dbReference>
<dbReference type="GO" id="GO:0005829">
    <property type="term" value="C:cytosol"/>
    <property type="evidence" value="ECO:0007669"/>
    <property type="project" value="TreeGrafter"/>
</dbReference>
<dbReference type="GO" id="GO:0042132">
    <property type="term" value="F:fructose 1,6-bisphosphate 1-phosphatase activity"/>
    <property type="evidence" value="ECO:0007669"/>
    <property type="project" value="UniProtKB-UniRule"/>
</dbReference>
<dbReference type="GO" id="GO:0000287">
    <property type="term" value="F:magnesium ion binding"/>
    <property type="evidence" value="ECO:0007669"/>
    <property type="project" value="UniProtKB-UniRule"/>
</dbReference>
<dbReference type="GO" id="GO:0030388">
    <property type="term" value="P:fructose 1,6-bisphosphate metabolic process"/>
    <property type="evidence" value="ECO:0007669"/>
    <property type="project" value="TreeGrafter"/>
</dbReference>
<dbReference type="GO" id="GO:0006002">
    <property type="term" value="P:fructose 6-phosphate metabolic process"/>
    <property type="evidence" value="ECO:0007669"/>
    <property type="project" value="TreeGrafter"/>
</dbReference>
<dbReference type="GO" id="GO:0006000">
    <property type="term" value="P:fructose metabolic process"/>
    <property type="evidence" value="ECO:0007669"/>
    <property type="project" value="TreeGrafter"/>
</dbReference>
<dbReference type="GO" id="GO:0006094">
    <property type="term" value="P:gluconeogenesis"/>
    <property type="evidence" value="ECO:0007669"/>
    <property type="project" value="UniProtKB-UniRule"/>
</dbReference>
<dbReference type="GO" id="GO:0005986">
    <property type="term" value="P:sucrose biosynthetic process"/>
    <property type="evidence" value="ECO:0007669"/>
    <property type="project" value="TreeGrafter"/>
</dbReference>
<dbReference type="CDD" id="cd00354">
    <property type="entry name" value="FBPase"/>
    <property type="match status" value="1"/>
</dbReference>
<dbReference type="FunFam" id="3.30.540.10:FF:000006">
    <property type="entry name" value="Fructose-1,6-bisphosphatase class 1"/>
    <property type="match status" value="1"/>
</dbReference>
<dbReference type="FunFam" id="3.40.190.80:FF:000011">
    <property type="entry name" value="Fructose-1,6-bisphosphatase class 1"/>
    <property type="match status" value="1"/>
</dbReference>
<dbReference type="Gene3D" id="3.40.190.80">
    <property type="match status" value="1"/>
</dbReference>
<dbReference type="Gene3D" id="3.30.540.10">
    <property type="entry name" value="Fructose-1,6-Bisphosphatase, subunit A, domain 1"/>
    <property type="match status" value="1"/>
</dbReference>
<dbReference type="HAMAP" id="MF_01855">
    <property type="entry name" value="FBPase_class1"/>
    <property type="match status" value="1"/>
</dbReference>
<dbReference type="InterPro" id="IPR044015">
    <property type="entry name" value="FBPase_C_dom"/>
</dbReference>
<dbReference type="InterPro" id="IPR000146">
    <property type="entry name" value="FBPase_class-1"/>
</dbReference>
<dbReference type="InterPro" id="IPR033391">
    <property type="entry name" value="FBPase_N"/>
</dbReference>
<dbReference type="InterPro" id="IPR028343">
    <property type="entry name" value="FBPtase"/>
</dbReference>
<dbReference type="NCBIfam" id="NF006779">
    <property type="entry name" value="PRK09293.1-3"/>
    <property type="match status" value="1"/>
</dbReference>
<dbReference type="NCBIfam" id="NF006780">
    <property type="entry name" value="PRK09293.1-4"/>
    <property type="match status" value="1"/>
</dbReference>
<dbReference type="PANTHER" id="PTHR11556">
    <property type="entry name" value="FRUCTOSE-1,6-BISPHOSPHATASE-RELATED"/>
    <property type="match status" value="1"/>
</dbReference>
<dbReference type="PANTHER" id="PTHR11556:SF35">
    <property type="entry name" value="SEDOHEPTULOSE-1,7-BISPHOSPHATASE, CHLOROPLASTIC"/>
    <property type="match status" value="1"/>
</dbReference>
<dbReference type="Pfam" id="PF00316">
    <property type="entry name" value="FBPase"/>
    <property type="match status" value="1"/>
</dbReference>
<dbReference type="Pfam" id="PF18913">
    <property type="entry name" value="FBPase_C"/>
    <property type="match status" value="1"/>
</dbReference>
<dbReference type="PIRSF" id="PIRSF500210">
    <property type="entry name" value="FBPtase"/>
    <property type="match status" value="1"/>
</dbReference>
<dbReference type="PIRSF" id="PIRSF000904">
    <property type="entry name" value="FBPtase_SBPase"/>
    <property type="match status" value="1"/>
</dbReference>
<dbReference type="PRINTS" id="PR00115">
    <property type="entry name" value="F16BPHPHTASE"/>
</dbReference>
<dbReference type="SUPFAM" id="SSF56655">
    <property type="entry name" value="Carbohydrate phosphatase"/>
    <property type="match status" value="1"/>
</dbReference>
<organism>
    <name type="scientific">Xanthomonas euvesicatoria pv. vesicatoria (strain 85-10)</name>
    <name type="common">Xanthomonas campestris pv. vesicatoria</name>
    <dbReference type="NCBI Taxonomy" id="316273"/>
    <lineage>
        <taxon>Bacteria</taxon>
        <taxon>Pseudomonadati</taxon>
        <taxon>Pseudomonadota</taxon>
        <taxon>Gammaproteobacteria</taxon>
        <taxon>Lysobacterales</taxon>
        <taxon>Lysobacteraceae</taxon>
        <taxon>Xanthomonas</taxon>
    </lineage>
</organism>
<protein>
    <recommendedName>
        <fullName evidence="1">Fructose-1,6-bisphosphatase class 1</fullName>
        <shortName evidence="1">FBPase class 1</shortName>
        <ecNumber evidence="1">3.1.3.11</ecNumber>
    </recommendedName>
    <alternativeName>
        <fullName evidence="1">D-fructose-1,6-bisphosphate 1-phosphohydrolase class 1</fullName>
    </alternativeName>
</protein>
<feature type="chain" id="PRO_0000364754" description="Fructose-1,6-bisphosphatase class 1">
    <location>
        <begin position="1"/>
        <end position="336"/>
    </location>
</feature>
<feature type="binding site" evidence="1">
    <location>
        <position position="90"/>
    </location>
    <ligand>
        <name>Mg(2+)</name>
        <dbReference type="ChEBI" id="CHEBI:18420"/>
        <label>1</label>
    </ligand>
</feature>
<feature type="binding site" evidence="1">
    <location>
        <position position="112"/>
    </location>
    <ligand>
        <name>Mg(2+)</name>
        <dbReference type="ChEBI" id="CHEBI:18420"/>
        <label>1</label>
    </ligand>
</feature>
<feature type="binding site" evidence="1">
    <location>
        <position position="112"/>
    </location>
    <ligand>
        <name>Mg(2+)</name>
        <dbReference type="ChEBI" id="CHEBI:18420"/>
        <label>2</label>
    </ligand>
</feature>
<feature type="binding site" evidence="1">
    <location>
        <position position="114"/>
    </location>
    <ligand>
        <name>Mg(2+)</name>
        <dbReference type="ChEBI" id="CHEBI:18420"/>
        <label>1</label>
    </ligand>
</feature>
<feature type="binding site" evidence="1">
    <location>
        <begin position="115"/>
        <end position="118"/>
    </location>
    <ligand>
        <name>substrate</name>
    </ligand>
</feature>
<feature type="binding site" evidence="1">
    <location>
        <position position="115"/>
    </location>
    <ligand>
        <name>Mg(2+)</name>
        <dbReference type="ChEBI" id="CHEBI:18420"/>
        <label>2</label>
    </ligand>
</feature>
<feature type="binding site" evidence="1">
    <location>
        <position position="207"/>
    </location>
    <ligand>
        <name>substrate</name>
    </ligand>
</feature>
<feature type="binding site" evidence="1">
    <location>
        <position position="273"/>
    </location>
    <ligand>
        <name>substrate</name>
    </ligand>
</feature>
<feature type="binding site" evidence="1">
    <location>
        <position position="279"/>
    </location>
    <ligand>
        <name>Mg(2+)</name>
        <dbReference type="ChEBI" id="CHEBI:18420"/>
        <label>2</label>
    </ligand>
</feature>
<gene>
    <name evidence="1" type="primary">fbp</name>
    <name type="ordered locus">XCV0098</name>
</gene>